<organism>
    <name type="scientific">Arabidopsis thaliana</name>
    <name type="common">Mouse-ear cress</name>
    <dbReference type="NCBI Taxonomy" id="3702"/>
    <lineage>
        <taxon>Eukaryota</taxon>
        <taxon>Viridiplantae</taxon>
        <taxon>Streptophyta</taxon>
        <taxon>Embryophyta</taxon>
        <taxon>Tracheophyta</taxon>
        <taxon>Spermatophyta</taxon>
        <taxon>Magnoliopsida</taxon>
        <taxon>eudicotyledons</taxon>
        <taxon>Gunneridae</taxon>
        <taxon>Pentapetalae</taxon>
        <taxon>rosids</taxon>
        <taxon>malvids</taxon>
        <taxon>Brassicales</taxon>
        <taxon>Brassicaceae</taxon>
        <taxon>Camelineae</taxon>
        <taxon>Arabidopsis</taxon>
    </lineage>
</organism>
<protein>
    <recommendedName>
        <fullName evidence="4">Alpha,alpha-trehalose-phosphate synthase [UDP-forming] 6</fullName>
        <ecNumber evidence="3">2.4.1.15</ecNumber>
    </recommendedName>
    <alternativeName>
        <fullName evidence="4">Trehalose-6-phosphate synthase 6</fullName>
        <shortName evidence="4">AtTPS6</shortName>
    </alternativeName>
</protein>
<proteinExistence type="evidence at protein level"/>
<feature type="chain" id="PRO_0000324827" description="Alpha,alpha-trehalose-phosphate synthase [UDP-forming] 6">
    <location>
        <begin position="1"/>
        <end position="860"/>
    </location>
</feature>
<feature type="region of interest" description="Glycosyltransferase">
    <location>
        <begin position="53"/>
        <end position="557"/>
    </location>
</feature>
<feature type="modified residue" description="Phosphoserine" evidence="1">
    <location>
        <position position="5"/>
    </location>
</feature>
<feature type="splice variant" id="VSP_032376" description="In isoform 2." evidence="5">
    <original>LRKAVEWENCVAAVDCSWKQIAEPVM</original>
    <variation>YSTKTFYFLALPLYLITQAPSNYYTG</variation>
    <location>
        <begin position="675"/>
        <end position="700"/>
    </location>
</feature>
<feature type="splice variant" id="VSP_032377" description="In isoform 2." evidence="5">
    <location>
        <begin position="701"/>
        <end position="860"/>
    </location>
</feature>
<feature type="mutagenesis site" description="In cps-1; loss of pavement cell lobes and altered trichomes branching." evidence="3">
    <original>R</original>
    <variation>S</variation>
    <location>
        <position position="152"/>
    </location>
</feature>
<sequence>MVSRSYSNLLELASGDSPTFGRMNRQIPRIMAVAGIMSNIDNDSKDTDLSPKDRIIIVANELPIRAQRRVDGNGSGSSSSSTCCSKGWNFSWDENSLLLQLKDGLGDEAIEVIYVGCLKEEIPLNEQEEVYQILLESFKCVPTFLPLDLYTRYYHGFCKQQLWPLFHYMLPLSPDLGGRFDRTLWQAYVSVNKIFADRIMEVINPEDDFVWIHDYHLMVLPTFLRKRFNRVKLGFFLHSPFPSSEIYKTLPIREELLRALLNSDLIGFHTFDYARHFLSCCSRMLGLTYESKRGYIGLEYYGRTVSIKILPVGIHMGQLQSVLSLPETERKVGELIERYGRKGRTMLLGVDDMDIFKGITLKLLAMEQLLMQHPEWQGKVVLVQIANPARGKGKDVKEMQAETYSTVKRINETFGRPGYDPIVLIDAPLKFYERVAYYVVAECCLVTAVRDGMNLIPYEYIVSRQGNEKLDKILKLEANNRNKKSMLVVSEFIGCSPSLSGAIRVNPWNVDAVADAMDSALEVAEPEKQLRHEKHYKYVSTHDVGYWARSFLQDLERSCGEHGRRRCWGIGFGLSFRVVALDQSFRKLSMEHIVSAYKRTKTRAILLDYDDTLMPQGSIDKRPSSKSIDILNTLCRDKGNLVFIVSAKSRETLSDWFSPCEKLGIAAEHGYFLRLRKAVEWENCVAAVDCSWKQIAEPVMELYTETTDGSTIEDKETALVWSYEDADPDFGSCQAKELLDHLESVLANEPVTVKRGQNYVEVKPQGVSKGLIARRMLSMMQERGTLPEFVLCIGDDRSDEDMFEVICSSTEGPSIAPRAEIFACTVGQKPSKAKYYLDDTTEIVRLMHGLASVTDQITPV</sequence>
<name>TPS6_ARATH</name>
<accession>Q94AH8</accession>
<accession>Q9C9W6</accession>
<keyword id="KW-0025">Alternative splicing</keyword>
<keyword id="KW-0328">Glycosyltransferase</keyword>
<keyword id="KW-0597">Phosphoprotein</keyword>
<keyword id="KW-1185">Reference proteome</keyword>
<keyword id="KW-0808">Transferase</keyword>
<reference key="1">
    <citation type="journal article" date="2000" name="Nature">
        <title>Sequence and analysis of chromosome 1 of the plant Arabidopsis thaliana.</title>
        <authorList>
            <person name="Theologis A."/>
            <person name="Ecker J.R."/>
            <person name="Palm C.J."/>
            <person name="Federspiel N.A."/>
            <person name="Kaul S."/>
            <person name="White O."/>
            <person name="Alonso J."/>
            <person name="Altafi H."/>
            <person name="Araujo R."/>
            <person name="Bowman C.L."/>
            <person name="Brooks S.Y."/>
            <person name="Buehler E."/>
            <person name="Chan A."/>
            <person name="Chao Q."/>
            <person name="Chen H."/>
            <person name="Cheuk R.F."/>
            <person name="Chin C.W."/>
            <person name="Chung M.K."/>
            <person name="Conn L."/>
            <person name="Conway A.B."/>
            <person name="Conway A.R."/>
            <person name="Creasy T.H."/>
            <person name="Dewar K."/>
            <person name="Dunn P."/>
            <person name="Etgu P."/>
            <person name="Feldblyum T.V."/>
            <person name="Feng J.-D."/>
            <person name="Fong B."/>
            <person name="Fujii C.Y."/>
            <person name="Gill J.E."/>
            <person name="Goldsmith A.D."/>
            <person name="Haas B."/>
            <person name="Hansen N.F."/>
            <person name="Hughes B."/>
            <person name="Huizar L."/>
            <person name="Hunter J.L."/>
            <person name="Jenkins J."/>
            <person name="Johnson-Hopson C."/>
            <person name="Khan S."/>
            <person name="Khaykin E."/>
            <person name="Kim C.J."/>
            <person name="Koo H.L."/>
            <person name="Kremenetskaia I."/>
            <person name="Kurtz D.B."/>
            <person name="Kwan A."/>
            <person name="Lam B."/>
            <person name="Langin-Hooper S."/>
            <person name="Lee A."/>
            <person name="Lee J.M."/>
            <person name="Lenz C.A."/>
            <person name="Li J.H."/>
            <person name="Li Y.-P."/>
            <person name="Lin X."/>
            <person name="Liu S.X."/>
            <person name="Liu Z.A."/>
            <person name="Luros J.S."/>
            <person name="Maiti R."/>
            <person name="Marziali A."/>
            <person name="Militscher J."/>
            <person name="Miranda M."/>
            <person name="Nguyen M."/>
            <person name="Nierman W.C."/>
            <person name="Osborne B.I."/>
            <person name="Pai G."/>
            <person name="Peterson J."/>
            <person name="Pham P.K."/>
            <person name="Rizzo M."/>
            <person name="Rooney T."/>
            <person name="Rowley D."/>
            <person name="Sakano H."/>
            <person name="Salzberg S.L."/>
            <person name="Schwartz J.R."/>
            <person name="Shinn P."/>
            <person name="Southwick A.M."/>
            <person name="Sun H."/>
            <person name="Tallon L.J."/>
            <person name="Tambunga G."/>
            <person name="Toriumi M.J."/>
            <person name="Town C.D."/>
            <person name="Utterback T."/>
            <person name="Van Aken S."/>
            <person name="Vaysberg M."/>
            <person name="Vysotskaia V.S."/>
            <person name="Walker M."/>
            <person name="Wu D."/>
            <person name="Yu G."/>
            <person name="Fraser C.M."/>
            <person name="Venter J.C."/>
            <person name="Davis R.W."/>
        </authorList>
    </citation>
    <scope>NUCLEOTIDE SEQUENCE [LARGE SCALE GENOMIC DNA]</scope>
    <source>
        <strain>cv. Columbia</strain>
    </source>
</reference>
<reference key="2">
    <citation type="journal article" date="2017" name="Plant J.">
        <title>Araport11: a complete reannotation of the Arabidopsis thaliana reference genome.</title>
        <authorList>
            <person name="Cheng C.Y."/>
            <person name="Krishnakumar V."/>
            <person name="Chan A.P."/>
            <person name="Thibaud-Nissen F."/>
            <person name="Schobel S."/>
            <person name="Town C.D."/>
        </authorList>
    </citation>
    <scope>GENOME REANNOTATION</scope>
    <source>
        <strain>cv. Columbia</strain>
    </source>
</reference>
<reference key="3">
    <citation type="journal article" date="2003" name="Science">
        <title>Empirical analysis of transcriptional activity in the Arabidopsis genome.</title>
        <authorList>
            <person name="Yamada K."/>
            <person name="Lim J."/>
            <person name="Dale J.M."/>
            <person name="Chen H."/>
            <person name="Shinn P."/>
            <person name="Palm C.J."/>
            <person name="Southwick A.M."/>
            <person name="Wu H.C."/>
            <person name="Kim C.J."/>
            <person name="Nguyen M."/>
            <person name="Pham P.K."/>
            <person name="Cheuk R.F."/>
            <person name="Karlin-Newmann G."/>
            <person name="Liu S.X."/>
            <person name="Lam B."/>
            <person name="Sakano H."/>
            <person name="Wu T."/>
            <person name="Yu G."/>
            <person name="Miranda M."/>
            <person name="Quach H.L."/>
            <person name="Tripp M."/>
            <person name="Chang C.H."/>
            <person name="Lee J.M."/>
            <person name="Toriumi M.J."/>
            <person name="Chan M.M."/>
            <person name="Tang C.C."/>
            <person name="Onodera C.S."/>
            <person name="Deng J.M."/>
            <person name="Akiyama K."/>
            <person name="Ansari Y."/>
            <person name="Arakawa T."/>
            <person name="Banh J."/>
            <person name="Banno F."/>
            <person name="Bowser L."/>
            <person name="Brooks S.Y."/>
            <person name="Carninci P."/>
            <person name="Chao Q."/>
            <person name="Choy N."/>
            <person name="Enju A."/>
            <person name="Goldsmith A.D."/>
            <person name="Gurjal M."/>
            <person name="Hansen N.F."/>
            <person name="Hayashizaki Y."/>
            <person name="Johnson-Hopson C."/>
            <person name="Hsuan V.W."/>
            <person name="Iida K."/>
            <person name="Karnes M."/>
            <person name="Khan S."/>
            <person name="Koesema E."/>
            <person name="Ishida J."/>
            <person name="Jiang P.X."/>
            <person name="Jones T."/>
            <person name="Kawai J."/>
            <person name="Kamiya A."/>
            <person name="Meyers C."/>
            <person name="Nakajima M."/>
            <person name="Narusaka M."/>
            <person name="Seki M."/>
            <person name="Sakurai T."/>
            <person name="Satou M."/>
            <person name="Tamse R."/>
            <person name="Vaysberg M."/>
            <person name="Wallender E.K."/>
            <person name="Wong C."/>
            <person name="Yamamura Y."/>
            <person name="Yuan S."/>
            <person name="Shinozaki K."/>
            <person name="Davis R.W."/>
            <person name="Theologis A."/>
            <person name="Ecker J.R."/>
        </authorList>
    </citation>
    <scope>NUCLEOTIDE SEQUENCE [LARGE SCALE MRNA] (ISOFORM2)</scope>
    <source>
        <strain>cv. Columbia</strain>
    </source>
</reference>
<reference key="4">
    <citation type="journal article" date="2001" name="Trends Plant Sci.">
        <title>An unexpected plethora of trehalose biosynthesis genes in Arabidopsis thaliana.</title>
        <authorList>
            <person name="Leyman B."/>
            <person name="Van Dijck P."/>
            <person name="Thevelein J.M."/>
        </authorList>
    </citation>
    <scope>GENE FAMILY</scope>
    <scope>NOMENCLATURE</scope>
</reference>
<reference key="5">
    <citation type="journal article" date="2006" name="Plant J.">
        <title>Phosphorylation and 14-3-3 binding of Arabidopsis trehalose-phosphate synthase 5 in response to 2-deoxyglucose.</title>
        <authorList>
            <person name="Harthill J.E."/>
            <person name="Meek S.E.M."/>
            <person name="Morrice N."/>
            <person name="Peggie M.W."/>
            <person name="Borch J."/>
            <person name="Wong B.H.C."/>
            <person name="Mackintosh C."/>
        </authorList>
    </citation>
    <scope>PHOSPHORYLATION</scope>
    <scope>INTERACTION WITH GRF/14-3-3</scope>
    <scope>IDENTIFICATION BY MASS SPECTROMETRY</scope>
</reference>
<reference key="6">
    <citation type="journal article" date="2008" name="Plant Physiol.">
        <title>Trehalose-6-phosphate synthase/phosphatase regulates cell shape and plant architecture in Arabidopsis.</title>
        <authorList>
            <person name="Chary S.N."/>
            <person name="Hicks G.R."/>
            <person name="Choi Y.G."/>
            <person name="Carter D."/>
            <person name="Raikhel N.V."/>
        </authorList>
    </citation>
    <scope>FUNCTION</scope>
    <scope>CATALYTIC ACTIVITY</scope>
    <scope>TISSUE SPECIFICITY</scope>
    <scope>MUTAGENESIS OF ARG-152</scope>
</reference>
<gene>
    <name evidence="4" type="primary">TPS6</name>
    <name evidence="6" type="ordered locus">At1g68020</name>
    <name evidence="7" type="ORF">T23K23.13</name>
</gene>
<comment type="function">
    <text evidence="3">Regulates plant architecture, shape of epidermal pavement cells and branching of trichomes.</text>
</comment>
<comment type="catalytic activity">
    <reaction evidence="3">
        <text>D-glucose 6-phosphate + UDP-alpha-D-glucose = alpha,alpha-trehalose 6-phosphate + UDP + H(+)</text>
        <dbReference type="Rhea" id="RHEA:18889"/>
        <dbReference type="ChEBI" id="CHEBI:15378"/>
        <dbReference type="ChEBI" id="CHEBI:58223"/>
        <dbReference type="ChEBI" id="CHEBI:58429"/>
        <dbReference type="ChEBI" id="CHEBI:58885"/>
        <dbReference type="ChEBI" id="CHEBI:61548"/>
        <dbReference type="EC" id="2.4.1.15"/>
    </reaction>
</comment>
<comment type="subunit">
    <text evidence="2">Binds to the phosphopeptide-binding site of GRF/14-3-3.</text>
</comment>
<comment type="alternative products">
    <event type="alternative splicing"/>
    <isoform>
        <id>Q94AH8-1</id>
        <name>1</name>
        <sequence type="displayed"/>
    </isoform>
    <isoform>
        <id>Q94AH8-2</id>
        <name>2</name>
        <sequence type="described" ref="VSP_032376 VSP_032377"/>
    </isoform>
</comment>
<comment type="tissue specificity">
    <text evidence="3">Expressed in seedlings, leaves, stems, flowers, siliques and roots.</text>
</comment>
<comment type="PTM">
    <text evidence="2">Phosphorylated.</text>
</comment>
<comment type="similarity">
    <text evidence="5">In the N-terminal section; belongs to the glycosyltransferase 20 family.</text>
</comment>
<comment type="similarity">
    <text evidence="5">In the C-terminal section; belongs to the trehalose phosphatase family.</text>
</comment>
<comment type="sequence caution" evidence="5">
    <conflict type="erroneous gene model prediction">
        <sequence resource="EMBL-CDS" id="AAG52003"/>
    </conflict>
</comment>
<dbReference type="EC" id="2.4.1.15" evidence="3"/>
<dbReference type="EMBL" id="AC012563">
    <property type="protein sequence ID" value="AAG52003.1"/>
    <property type="status" value="ALT_SEQ"/>
    <property type="molecule type" value="Genomic_DNA"/>
</dbReference>
<dbReference type="EMBL" id="CP002684">
    <property type="protein sequence ID" value="AEE34737.1"/>
    <property type="molecule type" value="Genomic_DNA"/>
</dbReference>
<dbReference type="EMBL" id="CP002684">
    <property type="protein sequence ID" value="AEE34738.1"/>
    <property type="molecule type" value="Genomic_DNA"/>
</dbReference>
<dbReference type="EMBL" id="CP002684">
    <property type="protein sequence ID" value="ANM60163.1"/>
    <property type="molecule type" value="Genomic_DNA"/>
</dbReference>
<dbReference type="EMBL" id="AY046028">
    <property type="protein sequence ID" value="AAK76702.1"/>
    <property type="molecule type" value="mRNA"/>
</dbReference>
<dbReference type="PIR" id="C96703">
    <property type="entry name" value="C96703"/>
</dbReference>
<dbReference type="RefSeq" id="NP_001322467.1">
    <molecule id="Q94AH8-1"/>
    <property type="nucleotide sequence ID" value="NM_001334340.1"/>
</dbReference>
<dbReference type="RefSeq" id="NP_564918.1">
    <molecule id="Q94AH8-2"/>
    <property type="nucleotide sequence ID" value="NM_105472.3"/>
</dbReference>
<dbReference type="RefSeq" id="NP_974105.1">
    <molecule id="Q94AH8-1"/>
    <property type="nucleotide sequence ID" value="NM_202376.3"/>
</dbReference>
<dbReference type="SMR" id="Q94AH8"/>
<dbReference type="BioGRID" id="28351">
    <property type="interactions" value="1"/>
</dbReference>
<dbReference type="FunCoup" id="Q94AH8">
    <property type="interactions" value="366"/>
</dbReference>
<dbReference type="IntAct" id="Q94AH8">
    <property type="interactions" value="3"/>
</dbReference>
<dbReference type="STRING" id="3702.Q94AH8"/>
<dbReference type="CAZy" id="GT20">
    <property type="family name" value="Glycosyltransferase Family 20"/>
</dbReference>
<dbReference type="iPTMnet" id="Q94AH8"/>
<dbReference type="PaxDb" id="3702-AT1G68020.2"/>
<dbReference type="ProteomicsDB" id="228384">
    <molecule id="Q94AH8-1"/>
</dbReference>
<dbReference type="EnsemblPlants" id="AT1G68020.1">
    <molecule id="Q94AH8-2"/>
    <property type="protein sequence ID" value="AT1G68020.1"/>
    <property type="gene ID" value="AT1G68020"/>
</dbReference>
<dbReference type="EnsemblPlants" id="AT1G68020.2">
    <molecule id="Q94AH8-1"/>
    <property type="protein sequence ID" value="AT1G68020.2"/>
    <property type="gene ID" value="AT1G68020"/>
</dbReference>
<dbReference type="EnsemblPlants" id="AT1G68020.3">
    <molecule id="Q94AH8-1"/>
    <property type="protein sequence ID" value="AT1G68020.3"/>
    <property type="gene ID" value="AT1G68020"/>
</dbReference>
<dbReference type="GeneID" id="843130"/>
<dbReference type="Gramene" id="AT1G68020.1">
    <molecule id="Q94AH8-2"/>
    <property type="protein sequence ID" value="AT1G68020.1"/>
    <property type="gene ID" value="AT1G68020"/>
</dbReference>
<dbReference type="Gramene" id="AT1G68020.2">
    <molecule id="Q94AH8-1"/>
    <property type="protein sequence ID" value="AT1G68020.2"/>
    <property type="gene ID" value="AT1G68020"/>
</dbReference>
<dbReference type="Gramene" id="AT1G68020.3">
    <molecule id="Q94AH8-1"/>
    <property type="protein sequence ID" value="AT1G68020.3"/>
    <property type="gene ID" value="AT1G68020"/>
</dbReference>
<dbReference type="KEGG" id="ath:AT1G68020"/>
<dbReference type="Araport" id="AT1G68020"/>
<dbReference type="TAIR" id="AT1G68020">
    <property type="gene designation" value="ATTPS6"/>
</dbReference>
<dbReference type="eggNOG" id="KOG1050">
    <property type="taxonomic scope" value="Eukaryota"/>
</dbReference>
<dbReference type="HOGENOM" id="CLU_002351_3_1_1"/>
<dbReference type="InParanoid" id="Q94AH8"/>
<dbReference type="OMA" id="GWEFSWD"/>
<dbReference type="OrthoDB" id="755951at2759"/>
<dbReference type="PhylomeDB" id="Q94AH8"/>
<dbReference type="BRENDA" id="2.4.1.15">
    <property type="organism ID" value="399"/>
</dbReference>
<dbReference type="PRO" id="PR:Q94AH8"/>
<dbReference type="Proteomes" id="UP000006548">
    <property type="component" value="Chromosome 1"/>
</dbReference>
<dbReference type="ExpressionAtlas" id="Q94AH8">
    <property type="expression patterns" value="baseline and differential"/>
</dbReference>
<dbReference type="GO" id="GO:0003825">
    <property type="term" value="F:alpha,alpha-trehalose-phosphate synthase (UDP-forming) activity"/>
    <property type="evidence" value="ECO:0000316"/>
    <property type="project" value="TAIR"/>
</dbReference>
<dbReference type="GO" id="GO:0004805">
    <property type="term" value="F:trehalose-phosphatase activity"/>
    <property type="evidence" value="ECO:0000316"/>
    <property type="project" value="TAIR"/>
</dbReference>
<dbReference type="GO" id="GO:0005992">
    <property type="term" value="P:trehalose biosynthetic process"/>
    <property type="evidence" value="ECO:0000316"/>
    <property type="project" value="TAIR"/>
</dbReference>
<dbReference type="CDD" id="cd03788">
    <property type="entry name" value="GT20_TPS"/>
    <property type="match status" value="1"/>
</dbReference>
<dbReference type="CDD" id="cd01627">
    <property type="entry name" value="HAD_TPP"/>
    <property type="match status" value="1"/>
</dbReference>
<dbReference type="FunFam" id="3.40.50.2000:FF:000010">
    <property type="entry name" value="Alpha,alpha-trehalose-phosphate synthase"/>
    <property type="match status" value="1"/>
</dbReference>
<dbReference type="FunFam" id="3.40.50.1000:FF:000054">
    <property type="entry name" value="alpha,alpha-trehalose-phosphate synthase [UDP-forming] 6"/>
    <property type="match status" value="1"/>
</dbReference>
<dbReference type="FunFam" id="3.40.50.2000:FF:000017">
    <property type="entry name" value="alpha,alpha-trehalose-phosphate synthase [UDP-forming] 6"/>
    <property type="match status" value="1"/>
</dbReference>
<dbReference type="FunFam" id="3.40.50.1000:FF:000154">
    <property type="entry name" value="Trehalose-6-phosphate synthase 10"/>
    <property type="match status" value="1"/>
</dbReference>
<dbReference type="Gene3D" id="3.40.50.2000">
    <property type="entry name" value="Glycogen Phosphorylase B"/>
    <property type="match status" value="2"/>
</dbReference>
<dbReference type="Gene3D" id="3.40.50.1000">
    <property type="entry name" value="HAD superfamily/HAD-like"/>
    <property type="match status" value="2"/>
</dbReference>
<dbReference type="InterPro" id="IPR001830">
    <property type="entry name" value="Glyco_trans_20"/>
</dbReference>
<dbReference type="InterPro" id="IPR036412">
    <property type="entry name" value="HAD-like_sf"/>
</dbReference>
<dbReference type="InterPro" id="IPR006379">
    <property type="entry name" value="HAD-SF_hydro_IIB"/>
</dbReference>
<dbReference type="InterPro" id="IPR023214">
    <property type="entry name" value="HAD_sf"/>
</dbReference>
<dbReference type="InterPro" id="IPR003337">
    <property type="entry name" value="Trehalose_PPase"/>
</dbReference>
<dbReference type="NCBIfam" id="TIGR01484">
    <property type="entry name" value="HAD-SF-IIB"/>
    <property type="match status" value="1"/>
</dbReference>
<dbReference type="NCBIfam" id="TIGR00685">
    <property type="entry name" value="T6PP"/>
    <property type="match status" value="1"/>
</dbReference>
<dbReference type="PANTHER" id="PTHR10788:SF48">
    <property type="entry name" value="ALPHA,ALPHA-TREHALOSE-PHOSPHATE SYNTHASE [UDP-FORMING] 6"/>
    <property type="match status" value="1"/>
</dbReference>
<dbReference type="PANTHER" id="PTHR10788">
    <property type="entry name" value="TREHALOSE-6-PHOSPHATE SYNTHASE"/>
    <property type="match status" value="1"/>
</dbReference>
<dbReference type="Pfam" id="PF00982">
    <property type="entry name" value="Glyco_transf_20"/>
    <property type="match status" value="1"/>
</dbReference>
<dbReference type="Pfam" id="PF02358">
    <property type="entry name" value="Trehalose_PPase"/>
    <property type="match status" value="1"/>
</dbReference>
<dbReference type="SUPFAM" id="SSF56784">
    <property type="entry name" value="HAD-like"/>
    <property type="match status" value="1"/>
</dbReference>
<dbReference type="SUPFAM" id="SSF53756">
    <property type="entry name" value="UDP-Glycosyltransferase/glycogen phosphorylase"/>
    <property type="match status" value="1"/>
</dbReference>
<evidence type="ECO:0000250" key="1">
    <source>
        <dbReference type="UniProtKB" id="O23617"/>
    </source>
</evidence>
<evidence type="ECO:0000269" key="2">
    <source>
    </source>
</evidence>
<evidence type="ECO:0000269" key="3">
    <source>
    </source>
</evidence>
<evidence type="ECO:0000303" key="4">
    <source>
    </source>
</evidence>
<evidence type="ECO:0000305" key="5"/>
<evidence type="ECO:0000312" key="6">
    <source>
        <dbReference type="Araport" id="AT1G68020"/>
    </source>
</evidence>
<evidence type="ECO:0000312" key="7">
    <source>
        <dbReference type="EMBL" id="AAG52003.1"/>
    </source>
</evidence>